<comment type="function">
    <text evidence="1">Required for the insertion and/or proper folding and/or complex formation of integral membrane proteins into the membrane. Involved in integration of membrane proteins that insert both dependently and independently of the Sec translocase complex, as well as at least some lipoproteins. Aids folding of multispanning membrane proteins.</text>
</comment>
<comment type="subunit">
    <text evidence="1">Interacts with the Sec translocase complex via SecD. Specifically interacts with transmembrane segments of nascent integral membrane proteins during membrane integration.</text>
</comment>
<comment type="subcellular location">
    <subcellularLocation>
        <location evidence="1">Cell inner membrane</location>
        <topology evidence="1">Multi-pass membrane protein</topology>
    </subcellularLocation>
</comment>
<comment type="similarity">
    <text evidence="1">Belongs to the OXA1/ALB3/YidC family. Type 1 subfamily.</text>
</comment>
<feature type="chain" id="PRO_1000187677" description="Membrane protein insertase YidC">
    <location>
        <begin position="1"/>
        <end position="616"/>
    </location>
</feature>
<feature type="transmembrane region" description="Helical" evidence="1">
    <location>
        <begin position="8"/>
        <end position="28"/>
    </location>
</feature>
<feature type="transmembrane region" description="Helical" evidence="1">
    <location>
        <begin position="386"/>
        <end position="406"/>
    </location>
</feature>
<feature type="transmembrane region" description="Helical" evidence="1">
    <location>
        <begin position="460"/>
        <end position="480"/>
    </location>
</feature>
<feature type="transmembrane region" description="Helical" evidence="1">
    <location>
        <begin position="516"/>
        <end position="536"/>
    </location>
</feature>
<feature type="transmembrane region" description="Helical" evidence="1">
    <location>
        <begin position="551"/>
        <end position="571"/>
    </location>
</feature>
<feature type="region of interest" description="Disordered" evidence="2">
    <location>
        <begin position="33"/>
        <end position="85"/>
    </location>
</feature>
<feature type="compositionally biased region" description="Low complexity" evidence="2">
    <location>
        <begin position="36"/>
        <end position="51"/>
    </location>
</feature>
<feature type="compositionally biased region" description="Low complexity" evidence="2">
    <location>
        <begin position="62"/>
        <end position="80"/>
    </location>
</feature>
<proteinExistence type="inferred from homology"/>
<accession>A9W590</accession>
<keyword id="KW-0997">Cell inner membrane</keyword>
<keyword id="KW-1003">Cell membrane</keyword>
<keyword id="KW-0143">Chaperone</keyword>
<keyword id="KW-0472">Membrane</keyword>
<keyword id="KW-0653">Protein transport</keyword>
<keyword id="KW-0812">Transmembrane</keyword>
<keyword id="KW-1133">Transmembrane helix</keyword>
<keyword id="KW-0813">Transport</keyword>
<reference key="1">
    <citation type="submission" date="2007-12" db="EMBL/GenBank/DDBJ databases">
        <title>Complete sequence of Methylobacterium extorquens PA1.</title>
        <authorList>
            <consortium name="US DOE Joint Genome Institute"/>
            <person name="Copeland A."/>
            <person name="Lucas S."/>
            <person name="Lapidus A."/>
            <person name="Barry K."/>
            <person name="Glavina del Rio T."/>
            <person name="Dalin E."/>
            <person name="Tice H."/>
            <person name="Pitluck S."/>
            <person name="Saunders E."/>
            <person name="Brettin T."/>
            <person name="Bruce D."/>
            <person name="Detter J.C."/>
            <person name="Han C."/>
            <person name="Schmutz J."/>
            <person name="Larimer F."/>
            <person name="Land M."/>
            <person name="Hauser L."/>
            <person name="Kyrpides N."/>
            <person name="Kim E."/>
            <person name="Marx C."/>
            <person name="Richardson P."/>
        </authorList>
    </citation>
    <scope>NUCLEOTIDE SEQUENCE [LARGE SCALE GENOMIC DNA]</scope>
    <source>
        <strain>PA1</strain>
    </source>
</reference>
<dbReference type="EMBL" id="CP000908">
    <property type="protein sequence ID" value="ABY30746.1"/>
    <property type="molecule type" value="Genomic_DNA"/>
</dbReference>
<dbReference type="RefSeq" id="WP_012253786.1">
    <property type="nucleotide sequence ID" value="NC_010172.1"/>
</dbReference>
<dbReference type="SMR" id="A9W590"/>
<dbReference type="KEGG" id="mex:Mext_2351"/>
<dbReference type="eggNOG" id="COG0706">
    <property type="taxonomic scope" value="Bacteria"/>
</dbReference>
<dbReference type="HOGENOM" id="CLU_016535_1_0_5"/>
<dbReference type="BioCyc" id="MEXT419610:MEXT_RS11845-MONOMER"/>
<dbReference type="GO" id="GO:0005886">
    <property type="term" value="C:plasma membrane"/>
    <property type="evidence" value="ECO:0007669"/>
    <property type="project" value="UniProtKB-SubCell"/>
</dbReference>
<dbReference type="GO" id="GO:0032977">
    <property type="term" value="F:membrane insertase activity"/>
    <property type="evidence" value="ECO:0007669"/>
    <property type="project" value="InterPro"/>
</dbReference>
<dbReference type="GO" id="GO:0051205">
    <property type="term" value="P:protein insertion into membrane"/>
    <property type="evidence" value="ECO:0007669"/>
    <property type="project" value="TreeGrafter"/>
</dbReference>
<dbReference type="GO" id="GO:0015031">
    <property type="term" value="P:protein transport"/>
    <property type="evidence" value="ECO:0007669"/>
    <property type="project" value="UniProtKB-KW"/>
</dbReference>
<dbReference type="CDD" id="cd20070">
    <property type="entry name" value="5TM_YidC_Alb3"/>
    <property type="match status" value="1"/>
</dbReference>
<dbReference type="CDD" id="cd19961">
    <property type="entry name" value="EcYidC-like_peri"/>
    <property type="match status" value="1"/>
</dbReference>
<dbReference type="Gene3D" id="2.70.98.90">
    <property type="match status" value="1"/>
</dbReference>
<dbReference type="HAMAP" id="MF_01810">
    <property type="entry name" value="YidC_type1"/>
    <property type="match status" value="1"/>
</dbReference>
<dbReference type="InterPro" id="IPR019998">
    <property type="entry name" value="Membr_insert_YidC"/>
</dbReference>
<dbReference type="InterPro" id="IPR028053">
    <property type="entry name" value="Membr_insert_YidC_N"/>
</dbReference>
<dbReference type="InterPro" id="IPR001708">
    <property type="entry name" value="YidC/ALB3/OXA1/COX18"/>
</dbReference>
<dbReference type="InterPro" id="IPR028055">
    <property type="entry name" value="YidC/Oxa/ALB_C"/>
</dbReference>
<dbReference type="InterPro" id="IPR047196">
    <property type="entry name" value="YidC_ALB_C"/>
</dbReference>
<dbReference type="InterPro" id="IPR038221">
    <property type="entry name" value="YidC_periplasmic_sf"/>
</dbReference>
<dbReference type="NCBIfam" id="NF002353">
    <property type="entry name" value="PRK01318.1-4"/>
    <property type="match status" value="1"/>
</dbReference>
<dbReference type="NCBIfam" id="TIGR03593">
    <property type="entry name" value="yidC_nterm"/>
    <property type="match status" value="1"/>
</dbReference>
<dbReference type="NCBIfam" id="TIGR03592">
    <property type="entry name" value="yidC_oxa1_cterm"/>
    <property type="match status" value="1"/>
</dbReference>
<dbReference type="PANTHER" id="PTHR12428:SF65">
    <property type="entry name" value="CYTOCHROME C OXIDASE ASSEMBLY PROTEIN COX18, MITOCHONDRIAL"/>
    <property type="match status" value="1"/>
</dbReference>
<dbReference type="PANTHER" id="PTHR12428">
    <property type="entry name" value="OXA1"/>
    <property type="match status" value="1"/>
</dbReference>
<dbReference type="Pfam" id="PF02096">
    <property type="entry name" value="60KD_IMP"/>
    <property type="match status" value="1"/>
</dbReference>
<dbReference type="Pfam" id="PF14849">
    <property type="entry name" value="YidC_periplas"/>
    <property type="match status" value="1"/>
</dbReference>
<dbReference type="PRINTS" id="PR00701">
    <property type="entry name" value="60KDINNERMP"/>
</dbReference>
<dbReference type="PRINTS" id="PR01900">
    <property type="entry name" value="YIDCPROTEIN"/>
</dbReference>
<name>YIDC_METEP</name>
<evidence type="ECO:0000255" key="1">
    <source>
        <dbReference type="HAMAP-Rule" id="MF_01810"/>
    </source>
</evidence>
<evidence type="ECO:0000256" key="2">
    <source>
        <dbReference type="SAM" id="MobiDB-lite"/>
    </source>
</evidence>
<protein>
    <recommendedName>
        <fullName evidence="1">Membrane protein insertase YidC</fullName>
    </recommendedName>
    <alternativeName>
        <fullName evidence="1">Foldase YidC</fullName>
    </alternativeName>
    <alternativeName>
        <fullName evidence="1">Membrane integrase YidC</fullName>
    </alternativeName>
    <alternativeName>
        <fullName evidence="1">Membrane protein YidC</fullName>
    </alternativeName>
</protein>
<gene>
    <name evidence="1" type="primary">yidC</name>
    <name type="ordered locus">Mext_2351</name>
</gene>
<sequence length="616" mass="68078">MGNDKTNMFVAIALSLVVLLGWHYFVTGPASERQRQAAQSQTAQTGAPQTADGIPSPSPREGGPNAPAPGTLPGAAAQGPVSREDALARSARVRIDTPALYGSIGLKGARIDDVSLKNYHETVSDESPRIVLLSPTGTANPYYAEFGWVGANAGPLPNADTLWKADGDLLAPGRPLTLTWDNGQGLVFKRIVAVDDKFMFTVRDEVENTSANPVTLYPYSLVSRWGKPQTQGYYVLHEGLIGVLGGDGLQEYTYDKVGKEPAYGGAATQGKAWTNVTGGWVGITDKYWAAAAIPEQDKPFTGAFTERTDGATKIYQTSVRGDAVTLAPNASSVTTQRLFAGAKEVNQINAYEREFGIKQFDLMIDWGWFWFLTKPMFRALDFFFHLLGNFGVSILLVTLILKLFFLPIANRSYVSMAKMKAVQPEMTSIRERYKDDRVKQQQAMMELYKKEKINPVAGCWPVLIQIPVFFALYKVLFITIEMRHAPFFGWIQDLAAPDPTSIVNLFGLLPFTPPEYIPIHLGVWPIIMGITMFIQMKMNPAPPDPVQAQVFAFMPIVFTFMLGSFPAGLVIYWAWNNTLSVIQQYVIMRRNGVKVELWDNLRGMFKRGNKSAAAKG</sequence>
<organism>
    <name type="scientific">Methylorubrum extorquens (strain PA1)</name>
    <name type="common">Methylobacterium extorquens</name>
    <dbReference type="NCBI Taxonomy" id="419610"/>
    <lineage>
        <taxon>Bacteria</taxon>
        <taxon>Pseudomonadati</taxon>
        <taxon>Pseudomonadota</taxon>
        <taxon>Alphaproteobacteria</taxon>
        <taxon>Hyphomicrobiales</taxon>
        <taxon>Methylobacteriaceae</taxon>
        <taxon>Methylorubrum</taxon>
    </lineage>
</organism>